<protein>
    <recommendedName>
        <fullName evidence="1">Formate--tetrahydrofolate ligase</fullName>
        <ecNumber evidence="1">6.3.4.3</ecNumber>
    </recommendedName>
    <alternativeName>
        <fullName evidence="1">Formyltetrahydrofolate synthetase</fullName>
        <shortName evidence="1">FHS</shortName>
        <shortName evidence="1">FTHFS</shortName>
    </alternativeName>
</protein>
<gene>
    <name evidence="1" type="primary">fhs</name>
    <name type="ordered locus">NMC0378</name>
</gene>
<sequence>MSFKTDAEIAQSSTMRPIGEIAAKLGLNADNIEPYGHYKAKINPAEAFKLPQKQGRLILVTAINPTPAGEGKTTVTIGLADALRHIGKDAVIALREPSLGPVFGVKGGAAGGGYAQVLPMEDINLHFTGDFHAIGAANNLLAAMLDNHIYQGNELDIDPKRVLWRRVVDMNDRQLRNIIDGMGKPVDGVMRPDGFDITVASEVMAVFCLAKDISDLKERLGNILVAYAKDGSPVYAKDLKAHGAMAVLLKDAIKPNLVQTIEGTPAFVHGGPFANIAHGCNSVTATRLAKHLADYAVTEAGFGADLGAEKFCDIKCRLAGLKPDAAVVVATVRALKYNGGVERANLGEENLEALAKGLPNLLKHISNLKNVFGLPVVVALNRFVSDSDAELAMIEKACAEHGVEVSLTEVWGKGGVGGADLARKVVNAIENQPNNFNFSYDVELSIKDKIRAIAQKVYGAEDVDFSAEASAEIASLEKLGLDKMPICMAKTQYSLSDNAKLLGCPEGFRITVRGITVSSGAGFIVALCGNMMKMPGLPKVPAAEKIDVDAEGVIHGLF</sequence>
<dbReference type="EC" id="6.3.4.3" evidence="1"/>
<dbReference type="EMBL" id="AM421808">
    <property type="protein sequence ID" value="CAM09687.1"/>
    <property type="molecule type" value="Genomic_DNA"/>
</dbReference>
<dbReference type="RefSeq" id="WP_002221503.1">
    <property type="nucleotide sequence ID" value="NC_008767.1"/>
</dbReference>
<dbReference type="SMR" id="A1KS57"/>
<dbReference type="KEGG" id="nmc:NMC0378"/>
<dbReference type="HOGENOM" id="CLU_003601_3_3_4"/>
<dbReference type="UniPathway" id="UPA00193"/>
<dbReference type="Proteomes" id="UP000002286">
    <property type="component" value="Chromosome"/>
</dbReference>
<dbReference type="GO" id="GO:0005524">
    <property type="term" value="F:ATP binding"/>
    <property type="evidence" value="ECO:0007669"/>
    <property type="project" value="UniProtKB-UniRule"/>
</dbReference>
<dbReference type="GO" id="GO:0004329">
    <property type="term" value="F:formate-tetrahydrofolate ligase activity"/>
    <property type="evidence" value="ECO:0007669"/>
    <property type="project" value="UniProtKB-UniRule"/>
</dbReference>
<dbReference type="GO" id="GO:0035999">
    <property type="term" value="P:tetrahydrofolate interconversion"/>
    <property type="evidence" value="ECO:0007669"/>
    <property type="project" value="UniProtKB-UniRule"/>
</dbReference>
<dbReference type="CDD" id="cd00477">
    <property type="entry name" value="FTHFS"/>
    <property type="match status" value="1"/>
</dbReference>
<dbReference type="FunFam" id="3.30.1510.10:FF:000001">
    <property type="entry name" value="Formate--tetrahydrofolate ligase"/>
    <property type="match status" value="1"/>
</dbReference>
<dbReference type="FunFam" id="3.10.410.10:FF:000001">
    <property type="entry name" value="Putative formate--tetrahydrofolate ligase"/>
    <property type="match status" value="1"/>
</dbReference>
<dbReference type="Gene3D" id="3.30.1510.10">
    <property type="entry name" value="Domain 2, N(10)-formyltetrahydrofolate synthetase"/>
    <property type="match status" value="1"/>
</dbReference>
<dbReference type="Gene3D" id="3.10.410.10">
    <property type="entry name" value="Formyltetrahydrofolate synthetase, domain 3"/>
    <property type="match status" value="1"/>
</dbReference>
<dbReference type="Gene3D" id="3.40.50.300">
    <property type="entry name" value="P-loop containing nucleotide triphosphate hydrolases"/>
    <property type="match status" value="1"/>
</dbReference>
<dbReference type="HAMAP" id="MF_01543">
    <property type="entry name" value="FTHFS"/>
    <property type="match status" value="1"/>
</dbReference>
<dbReference type="InterPro" id="IPR000559">
    <property type="entry name" value="Formate_THF_ligase"/>
</dbReference>
<dbReference type="InterPro" id="IPR020628">
    <property type="entry name" value="Formate_THF_ligase_CS"/>
</dbReference>
<dbReference type="InterPro" id="IPR027417">
    <property type="entry name" value="P-loop_NTPase"/>
</dbReference>
<dbReference type="NCBIfam" id="NF010030">
    <property type="entry name" value="PRK13505.1"/>
    <property type="match status" value="1"/>
</dbReference>
<dbReference type="Pfam" id="PF01268">
    <property type="entry name" value="FTHFS"/>
    <property type="match status" value="1"/>
</dbReference>
<dbReference type="SUPFAM" id="SSF52540">
    <property type="entry name" value="P-loop containing nucleoside triphosphate hydrolases"/>
    <property type="match status" value="1"/>
</dbReference>
<dbReference type="PROSITE" id="PS00721">
    <property type="entry name" value="FTHFS_1"/>
    <property type="match status" value="1"/>
</dbReference>
<dbReference type="PROSITE" id="PS00722">
    <property type="entry name" value="FTHFS_2"/>
    <property type="match status" value="1"/>
</dbReference>
<organism>
    <name type="scientific">Neisseria meningitidis serogroup C / serotype 2a (strain ATCC 700532 / DSM 15464 / FAM18)</name>
    <dbReference type="NCBI Taxonomy" id="272831"/>
    <lineage>
        <taxon>Bacteria</taxon>
        <taxon>Pseudomonadati</taxon>
        <taxon>Pseudomonadota</taxon>
        <taxon>Betaproteobacteria</taxon>
        <taxon>Neisseriales</taxon>
        <taxon>Neisseriaceae</taxon>
        <taxon>Neisseria</taxon>
    </lineage>
</organism>
<accession>A1KS57</accession>
<feature type="chain" id="PRO_0000300531" description="Formate--tetrahydrofolate ligase">
    <location>
        <begin position="1"/>
        <end position="558"/>
    </location>
</feature>
<feature type="binding site" evidence="1">
    <location>
        <begin position="66"/>
        <end position="73"/>
    </location>
    <ligand>
        <name>ATP</name>
        <dbReference type="ChEBI" id="CHEBI:30616"/>
    </ligand>
</feature>
<proteinExistence type="inferred from homology"/>
<reference key="1">
    <citation type="journal article" date="2007" name="PLoS Genet.">
        <title>Meningococcal genetic variation mechanisms viewed through comparative analysis of serogroup C strain FAM18.</title>
        <authorList>
            <person name="Bentley S.D."/>
            <person name="Vernikos G.S."/>
            <person name="Snyder L.A.S."/>
            <person name="Churcher C."/>
            <person name="Arrowsmith C."/>
            <person name="Chillingworth T."/>
            <person name="Cronin A."/>
            <person name="Davis P.H."/>
            <person name="Holroyd N.E."/>
            <person name="Jagels K."/>
            <person name="Maddison M."/>
            <person name="Moule S."/>
            <person name="Rabbinowitsch E."/>
            <person name="Sharp S."/>
            <person name="Unwin L."/>
            <person name="Whitehead S."/>
            <person name="Quail M.A."/>
            <person name="Achtman M."/>
            <person name="Barrell B.G."/>
            <person name="Saunders N.J."/>
            <person name="Parkhill J."/>
        </authorList>
    </citation>
    <scope>NUCLEOTIDE SEQUENCE [LARGE SCALE GENOMIC DNA]</scope>
    <source>
        <strain>ATCC 700532 / DSM 15464 / FAM18</strain>
    </source>
</reference>
<comment type="catalytic activity">
    <reaction evidence="1">
        <text>(6S)-5,6,7,8-tetrahydrofolate + formate + ATP = (6R)-10-formyltetrahydrofolate + ADP + phosphate</text>
        <dbReference type="Rhea" id="RHEA:20221"/>
        <dbReference type="ChEBI" id="CHEBI:15740"/>
        <dbReference type="ChEBI" id="CHEBI:30616"/>
        <dbReference type="ChEBI" id="CHEBI:43474"/>
        <dbReference type="ChEBI" id="CHEBI:57453"/>
        <dbReference type="ChEBI" id="CHEBI:195366"/>
        <dbReference type="ChEBI" id="CHEBI:456216"/>
        <dbReference type="EC" id="6.3.4.3"/>
    </reaction>
</comment>
<comment type="pathway">
    <text evidence="1">One-carbon metabolism; tetrahydrofolate interconversion.</text>
</comment>
<comment type="similarity">
    <text evidence="1">Belongs to the formate--tetrahydrofolate ligase family.</text>
</comment>
<keyword id="KW-0067">ATP-binding</keyword>
<keyword id="KW-0436">Ligase</keyword>
<keyword id="KW-0547">Nucleotide-binding</keyword>
<keyword id="KW-0554">One-carbon metabolism</keyword>
<evidence type="ECO:0000255" key="1">
    <source>
        <dbReference type="HAMAP-Rule" id="MF_01543"/>
    </source>
</evidence>
<name>FTHS_NEIMF</name>